<reference key="1">
    <citation type="journal article" date="2007" name="J. Bacteriol.">
        <title>Complete genome sequence of Haemophilus somnus (Histophilus somni) strain 129Pt and comparison to Haemophilus ducreyi 35000HP and Haemophilus influenzae Rd.</title>
        <authorList>
            <person name="Challacombe J.F."/>
            <person name="Duncan A.J."/>
            <person name="Brettin T.S."/>
            <person name="Bruce D."/>
            <person name="Chertkov O."/>
            <person name="Detter J.C."/>
            <person name="Han C.S."/>
            <person name="Misra M."/>
            <person name="Richardson P."/>
            <person name="Tapia R."/>
            <person name="Thayer N."/>
            <person name="Xie G."/>
            <person name="Inzana T.J."/>
        </authorList>
    </citation>
    <scope>NUCLEOTIDE SEQUENCE [LARGE SCALE GENOMIC DNA]</scope>
    <source>
        <strain>129Pt</strain>
    </source>
</reference>
<proteinExistence type="inferred from homology"/>
<organism>
    <name type="scientific">Histophilus somni (strain 129Pt)</name>
    <name type="common">Haemophilus somnus</name>
    <dbReference type="NCBI Taxonomy" id="205914"/>
    <lineage>
        <taxon>Bacteria</taxon>
        <taxon>Pseudomonadati</taxon>
        <taxon>Pseudomonadota</taxon>
        <taxon>Gammaproteobacteria</taxon>
        <taxon>Pasteurellales</taxon>
        <taxon>Pasteurellaceae</taxon>
        <taxon>Histophilus</taxon>
    </lineage>
</organism>
<feature type="chain" id="PRO_0000298000" description="S-ribosylhomocysteine lyase">
    <location>
        <begin position="1"/>
        <end position="168"/>
    </location>
</feature>
<feature type="binding site" evidence="1">
    <location>
        <position position="54"/>
    </location>
    <ligand>
        <name>Fe cation</name>
        <dbReference type="ChEBI" id="CHEBI:24875"/>
    </ligand>
</feature>
<feature type="binding site" evidence="1">
    <location>
        <position position="58"/>
    </location>
    <ligand>
        <name>Fe cation</name>
        <dbReference type="ChEBI" id="CHEBI:24875"/>
    </ligand>
</feature>
<feature type="binding site" evidence="1">
    <location>
        <position position="128"/>
    </location>
    <ligand>
        <name>Fe cation</name>
        <dbReference type="ChEBI" id="CHEBI:24875"/>
    </ligand>
</feature>
<evidence type="ECO:0000255" key="1">
    <source>
        <dbReference type="HAMAP-Rule" id="MF_00091"/>
    </source>
</evidence>
<name>LUXS_HISS1</name>
<sequence>MPLLDSFKVDHTRMNAPAVRIAKTMQTPKGDNITVFDLRFCIPNKEILSSKGIHTLEHLFAGFMRDHLNNEQVEIIDISPMGCRTGFYMSLIGTPNEQQVAEAWLISMQDILNIKNQDEIPELNEYQCGTYTEHSLEEAQNIAQNILHRGVGINKNEDLLLDDNLLNS</sequence>
<accession>Q0I202</accession>
<keyword id="KW-0071">Autoinducer synthesis</keyword>
<keyword id="KW-0408">Iron</keyword>
<keyword id="KW-0456">Lyase</keyword>
<keyword id="KW-0479">Metal-binding</keyword>
<keyword id="KW-0673">Quorum sensing</keyword>
<comment type="function">
    <text evidence="1">Involved in the synthesis of autoinducer 2 (AI-2) which is secreted by bacteria and is used to communicate both the cell density and the metabolic potential of the environment. The regulation of gene expression in response to changes in cell density is called quorum sensing. Catalyzes the transformation of S-ribosylhomocysteine (RHC) to homocysteine (HC) and 4,5-dihydroxy-2,3-pentadione (DPD).</text>
</comment>
<comment type="catalytic activity">
    <reaction evidence="1">
        <text>S-(5-deoxy-D-ribos-5-yl)-L-homocysteine = (S)-4,5-dihydroxypentane-2,3-dione + L-homocysteine</text>
        <dbReference type="Rhea" id="RHEA:17753"/>
        <dbReference type="ChEBI" id="CHEBI:29484"/>
        <dbReference type="ChEBI" id="CHEBI:58195"/>
        <dbReference type="ChEBI" id="CHEBI:58199"/>
        <dbReference type="EC" id="4.4.1.21"/>
    </reaction>
</comment>
<comment type="cofactor">
    <cofactor evidence="1">
        <name>Fe cation</name>
        <dbReference type="ChEBI" id="CHEBI:24875"/>
    </cofactor>
    <text evidence="1">Binds 1 Fe cation per subunit.</text>
</comment>
<comment type="subunit">
    <text evidence="1">Homodimer.</text>
</comment>
<comment type="similarity">
    <text evidence="1">Belongs to the LuxS family.</text>
</comment>
<gene>
    <name evidence="1" type="primary">luxS</name>
    <name type="ordered locus">HS_0550</name>
</gene>
<dbReference type="EC" id="4.4.1.21" evidence="1"/>
<dbReference type="EMBL" id="CP000436">
    <property type="protein sequence ID" value="ABI24827.1"/>
    <property type="molecule type" value="Genomic_DNA"/>
</dbReference>
<dbReference type="SMR" id="Q0I202"/>
<dbReference type="KEGG" id="hso:HS_0550"/>
<dbReference type="eggNOG" id="COG1854">
    <property type="taxonomic scope" value="Bacteria"/>
</dbReference>
<dbReference type="HOGENOM" id="CLU_107531_2_0_6"/>
<dbReference type="GO" id="GO:0005506">
    <property type="term" value="F:iron ion binding"/>
    <property type="evidence" value="ECO:0007669"/>
    <property type="project" value="InterPro"/>
</dbReference>
<dbReference type="GO" id="GO:0043768">
    <property type="term" value="F:S-ribosylhomocysteine lyase activity"/>
    <property type="evidence" value="ECO:0007669"/>
    <property type="project" value="UniProtKB-UniRule"/>
</dbReference>
<dbReference type="GO" id="GO:0009372">
    <property type="term" value="P:quorum sensing"/>
    <property type="evidence" value="ECO:0007669"/>
    <property type="project" value="UniProtKB-UniRule"/>
</dbReference>
<dbReference type="Gene3D" id="3.30.1360.80">
    <property type="entry name" value="S-ribosylhomocysteinase (LuxS)"/>
    <property type="match status" value="1"/>
</dbReference>
<dbReference type="HAMAP" id="MF_00091">
    <property type="entry name" value="LuxS"/>
    <property type="match status" value="1"/>
</dbReference>
<dbReference type="InterPro" id="IPR037005">
    <property type="entry name" value="LuxS_sf"/>
</dbReference>
<dbReference type="InterPro" id="IPR011249">
    <property type="entry name" value="Metalloenz_LuxS/M16"/>
</dbReference>
<dbReference type="InterPro" id="IPR003815">
    <property type="entry name" value="S-ribosylhomocysteinase"/>
</dbReference>
<dbReference type="NCBIfam" id="NF002602">
    <property type="entry name" value="PRK02260.1-2"/>
    <property type="match status" value="1"/>
</dbReference>
<dbReference type="PANTHER" id="PTHR35799">
    <property type="entry name" value="S-RIBOSYLHOMOCYSTEINE LYASE"/>
    <property type="match status" value="1"/>
</dbReference>
<dbReference type="PANTHER" id="PTHR35799:SF1">
    <property type="entry name" value="S-RIBOSYLHOMOCYSTEINE LYASE"/>
    <property type="match status" value="1"/>
</dbReference>
<dbReference type="Pfam" id="PF02664">
    <property type="entry name" value="LuxS"/>
    <property type="match status" value="1"/>
</dbReference>
<dbReference type="PIRSF" id="PIRSF006160">
    <property type="entry name" value="AI2"/>
    <property type="match status" value="1"/>
</dbReference>
<dbReference type="PRINTS" id="PR01487">
    <property type="entry name" value="LUXSPROTEIN"/>
</dbReference>
<dbReference type="SUPFAM" id="SSF63411">
    <property type="entry name" value="LuxS/MPP-like metallohydrolase"/>
    <property type="match status" value="1"/>
</dbReference>
<protein>
    <recommendedName>
        <fullName evidence="1">S-ribosylhomocysteine lyase</fullName>
        <ecNumber evidence="1">4.4.1.21</ecNumber>
    </recommendedName>
    <alternativeName>
        <fullName evidence="1">AI-2 synthesis protein</fullName>
    </alternativeName>
    <alternativeName>
        <fullName evidence="1">Autoinducer-2 production protein LuxS</fullName>
    </alternativeName>
</protein>